<gene>
    <name evidence="5" type="primary">igf2.L</name>
    <name type="synonym">igf2-b</name>
</gene>
<accession>Q6INW9</accession>
<proteinExistence type="evidence at transcript level"/>
<protein>
    <recommendedName>
        <fullName evidence="5">Insulin-like growth factor 2.L</fullName>
    </recommendedName>
    <alternativeName>
        <fullName>Insulin-like growth factor 2-B</fullName>
    </alternativeName>
    <alternativeName>
        <fullName>Insulin-like growth factor II-B</fullName>
        <shortName>IGF-II-B</shortName>
    </alternativeName>
</protein>
<comment type="function">
    <text evidence="2 3">The insulin-like growth factors, isolated from plasma, are structurally and functionally related to insulin but have a much higher growth-promoting activity. Promotes anterior neural development. Acts as a ligand for integrin which is required for IGF2 signaling.</text>
</comment>
<comment type="subcellular location">
    <subcellularLocation>
        <location evidence="1">Secreted</location>
    </subcellularLocation>
</comment>
<comment type="similarity">
    <text evidence="4">Belongs to the insulin family.</text>
</comment>
<comment type="sequence caution" evidence="5">
    <conflict type="erroneous initiation">
        <sequence resource="EMBL-CDS" id="AAH72153"/>
    </conflict>
</comment>
<feature type="signal peptide" evidence="4">
    <location>
        <begin position="1"/>
        <end position="56"/>
    </location>
</feature>
<feature type="chain" id="PRO_0000224641" description="Insulin-like growth factor 2.L" evidence="4">
    <location>
        <begin position="57"/>
        <end position="123"/>
    </location>
</feature>
<feature type="propeptide" id="PRO_0000224642" description="E peptide" evidence="4">
    <location>
        <begin position="124"/>
        <end position="217"/>
    </location>
</feature>
<feature type="region of interest" description="B" evidence="4">
    <location>
        <begin position="57"/>
        <end position="83"/>
    </location>
</feature>
<feature type="region of interest" description="C" evidence="4">
    <location>
        <begin position="84"/>
        <end position="96"/>
    </location>
</feature>
<feature type="region of interest" description="A" evidence="4">
    <location>
        <begin position="97"/>
        <end position="117"/>
    </location>
</feature>
<feature type="region of interest" description="D" evidence="4">
    <location>
        <begin position="118"/>
        <end position="123"/>
    </location>
</feature>
<feature type="site" description="Important for interaction with integrin" evidence="2">
    <location>
        <position position="79"/>
    </location>
</feature>
<feature type="site" description="Important for interaction with integrin" evidence="2">
    <location>
        <position position="89"/>
    </location>
</feature>
<feature type="site" description="Important for interaction with integrin" evidence="2">
    <location>
        <position position="92"/>
    </location>
</feature>
<feature type="site" description="Important for interaction with integrin" evidence="2">
    <location>
        <position position="93"/>
    </location>
</feature>
<feature type="disulfide bond" evidence="2">
    <location>
        <begin position="64"/>
        <end position="103"/>
    </location>
</feature>
<feature type="disulfide bond" evidence="2">
    <location>
        <begin position="76"/>
        <end position="116"/>
    </location>
</feature>
<feature type="disulfide bond" evidence="2">
    <location>
        <begin position="102"/>
        <end position="107"/>
    </location>
</feature>
<sequence length="217" mass="25078">MEQLSCKHRSSSMEAEAQLCRQTESRSTQLPRMSVMRHLFLLSITFLVYTLDSAKAYRPTETLCGGELVDTLQFVCGDRGFYFSTNNGRSNRRSNRGIVEECCFRSCDLELLETYCAKPSKNERDVSTAPATAIPPMNKQDLYHKHHHTKSSKYDIWQRKSIHRLRRGVPAIVRARQYRLLMQKAEESEQALLHRPLTTLPITRPLHLQQTSEPSHN</sequence>
<evidence type="ECO:0000250" key="1"/>
<evidence type="ECO:0000250" key="2">
    <source>
        <dbReference type="UniProtKB" id="P01344"/>
    </source>
</evidence>
<evidence type="ECO:0000250" key="3">
    <source>
        <dbReference type="UniProtKB" id="Q90WW4"/>
    </source>
</evidence>
<evidence type="ECO:0000255" key="4"/>
<evidence type="ECO:0000305" key="5"/>
<evidence type="ECO:0000312" key="6">
    <source>
        <dbReference type="EMBL" id="AAH72153.1"/>
    </source>
</evidence>
<name>IGF2B_XENLA</name>
<reference evidence="6" key="1">
    <citation type="submission" date="2004-06" db="EMBL/GenBank/DDBJ databases">
        <authorList>
            <consortium name="NIH - Xenopus Gene Collection (XGC) project"/>
        </authorList>
    </citation>
    <scope>NUCLEOTIDE SEQUENCE [LARGE SCALE MRNA]</scope>
    <source>
        <tissue evidence="6">Spleen</tissue>
    </source>
</reference>
<keyword id="KW-0217">Developmental protein</keyword>
<keyword id="KW-0221">Differentiation</keyword>
<keyword id="KW-1015">Disulfide bond</keyword>
<keyword id="KW-0339">Growth factor</keyword>
<keyword id="KW-0524">Neurogenesis</keyword>
<keyword id="KW-1185">Reference proteome</keyword>
<keyword id="KW-0964">Secreted</keyword>
<keyword id="KW-0732">Signal</keyword>
<organism>
    <name type="scientific">Xenopus laevis</name>
    <name type="common">African clawed frog</name>
    <dbReference type="NCBI Taxonomy" id="8355"/>
    <lineage>
        <taxon>Eukaryota</taxon>
        <taxon>Metazoa</taxon>
        <taxon>Chordata</taxon>
        <taxon>Craniata</taxon>
        <taxon>Vertebrata</taxon>
        <taxon>Euteleostomi</taxon>
        <taxon>Amphibia</taxon>
        <taxon>Batrachia</taxon>
        <taxon>Anura</taxon>
        <taxon>Pipoidea</taxon>
        <taxon>Pipidae</taxon>
        <taxon>Xenopodinae</taxon>
        <taxon>Xenopus</taxon>
        <taxon>Xenopus</taxon>
    </lineage>
</organism>
<dbReference type="EMBL" id="BC072153">
    <property type="protein sequence ID" value="AAH72153.1"/>
    <property type="status" value="ALT_INIT"/>
    <property type="molecule type" value="mRNA"/>
</dbReference>
<dbReference type="RefSeq" id="NP_001085129.2">
    <property type="nucleotide sequence ID" value="NM_001091660.1"/>
</dbReference>
<dbReference type="SMR" id="Q6INW9"/>
<dbReference type="DNASU" id="432206"/>
<dbReference type="GeneID" id="432206"/>
<dbReference type="KEGG" id="xla:432206"/>
<dbReference type="AGR" id="Xenbase:XB-GENE-864886"/>
<dbReference type="CTD" id="432206"/>
<dbReference type="Xenbase" id="XB-GENE-864886">
    <property type="gene designation" value="igf2.L"/>
</dbReference>
<dbReference type="OMA" id="KVQRMCA"/>
<dbReference type="OrthoDB" id="9449995at2759"/>
<dbReference type="Proteomes" id="UP000186698">
    <property type="component" value="Chromosome 4L"/>
</dbReference>
<dbReference type="Bgee" id="432206">
    <property type="expression patterns" value="Expressed in liver and 15 other cell types or tissues"/>
</dbReference>
<dbReference type="GO" id="GO:0005615">
    <property type="term" value="C:extracellular space"/>
    <property type="evidence" value="ECO:0000318"/>
    <property type="project" value="GO_Central"/>
</dbReference>
<dbReference type="GO" id="GO:0008083">
    <property type="term" value="F:growth factor activity"/>
    <property type="evidence" value="ECO:0000250"/>
    <property type="project" value="UniProtKB"/>
</dbReference>
<dbReference type="GO" id="GO:0005179">
    <property type="term" value="F:hormone activity"/>
    <property type="evidence" value="ECO:0007669"/>
    <property type="project" value="InterPro"/>
</dbReference>
<dbReference type="GO" id="GO:0005159">
    <property type="term" value="F:insulin-like growth factor receptor binding"/>
    <property type="evidence" value="ECO:0000318"/>
    <property type="project" value="GO_Central"/>
</dbReference>
<dbReference type="GO" id="GO:0005178">
    <property type="term" value="F:integrin binding"/>
    <property type="evidence" value="ECO:0000250"/>
    <property type="project" value="UniProtKB"/>
</dbReference>
<dbReference type="GO" id="GO:0043539">
    <property type="term" value="F:protein serine/threonine kinase activator activity"/>
    <property type="evidence" value="ECO:0000318"/>
    <property type="project" value="GO_Central"/>
</dbReference>
<dbReference type="GO" id="GO:0030154">
    <property type="term" value="P:cell differentiation"/>
    <property type="evidence" value="ECO:0007669"/>
    <property type="project" value="UniProtKB-KW"/>
</dbReference>
<dbReference type="GO" id="GO:0060323">
    <property type="term" value="P:head morphogenesis"/>
    <property type="evidence" value="ECO:0000250"/>
    <property type="project" value="UniProtKB"/>
</dbReference>
<dbReference type="GO" id="GO:0007399">
    <property type="term" value="P:nervous system development"/>
    <property type="evidence" value="ECO:0000250"/>
    <property type="project" value="UniProtKB"/>
</dbReference>
<dbReference type="GO" id="GO:0042104">
    <property type="term" value="P:positive regulation of activated T cell proliferation"/>
    <property type="evidence" value="ECO:0000318"/>
    <property type="project" value="GO_Central"/>
</dbReference>
<dbReference type="GO" id="GO:0008284">
    <property type="term" value="P:positive regulation of cell population proliferation"/>
    <property type="evidence" value="ECO:0000250"/>
    <property type="project" value="UniProtKB"/>
</dbReference>
<dbReference type="GO" id="GO:0046628">
    <property type="term" value="P:positive regulation of insulin receptor signaling pathway"/>
    <property type="evidence" value="ECO:0000318"/>
    <property type="project" value="GO_Central"/>
</dbReference>
<dbReference type="GO" id="GO:0043410">
    <property type="term" value="P:positive regulation of MAPK cascade"/>
    <property type="evidence" value="ECO:0000318"/>
    <property type="project" value="GO_Central"/>
</dbReference>
<dbReference type="GO" id="GO:0045944">
    <property type="term" value="P:positive regulation of transcription by RNA polymerase II"/>
    <property type="evidence" value="ECO:0000318"/>
    <property type="project" value="GO_Central"/>
</dbReference>
<dbReference type="GO" id="GO:1905564">
    <property type="term" value="P:positive regulation of vascular endothelial cell proliferation"/>
    <property type="evidence" value="ECO:0000318"/>
    <property type="project" value="GO_Central"/>
</dbReference>
<dbReference type="GO" id="GO:0051147">
    <property type="term" value="P:regulation of muscle cell differentiation"/>
    <property type="evidence" value="ECO:0000318"/>
    <property type="project" value="GO_Central"/>
</dbReference>
<dbReference type="CDD" id="cd04368">
    <property type="entry name" value="IlGF"/>
    <property type="match status" value="1"/>
</dbReference>
<dbReference type="FunFam" id="1.10.100.10:FF:000002">
    <property type="entry name" value="Insulin-like growth factor II preproprotein"/>
    <property type="match status" value="1"/>
</dbReference>
<dbReference type="Gene3D" id="1.10.100.10">
    <property type="entry name" value="Insulin-like"/>
    <property type="match status" value="1"/>
</dbReference>
<dbReference type="InterPro" id="IPR022334">
    <property type="entry name" value="IGF2"/>
</dbReference>
<dbReference type="InterPro" id="IPR013576">
    <property type="entry name" value="IGF2_C"/>
</dbReference>
<dbReference type="InterPro" id="IPR016179">
    <property type="entry name" value="Insulin-like"/>
</dbReference>
<dbReference type="InterPro" id="IPR022350">
    <property type="entry name" value="Insulin-like_growth_factor"/>
</dbReference>
<dbReference type="InterPro" id="IPR036438">
    <property type="entry name" value="Insulin-like_sf"/>
</dbReference>
<dbReference type="InterPro" id="IPR022353">
    <property type="entry name" value="Insulin_CS"/>
</dbReference>
<dbReference type="InterPro" id="IPR022352">
    <property type="entry name" value="Insulin_family"/>
</dbReference>
<dbReference type="PANTHER" id="PTHR46886">
    <property type="entry name" value="INSULIN-LIKE GROWTH FACTOR II"/>
    <property type="match status" value="1"/>
</dbReference>
<dbReference type="PANTHER" id="PTHR46886:SF3">
    <property type="entry name" value="INSULIN-LIKE GROWTH FACTOR II-A"/>
    <property type="match status" value="1"/>
</dbReference>
<dbReference type="Pfam" id="PF08365">
    <property type="entry name" value="IGF2_C"/>
    <property type="match status" value="1"/>
</dbReference>
<dbReference type="Pfam" id="PF00049">
    <property type="entry name" value="Insulin"/>
    <property type="match status" value="1"/>
</dbReference>
<dbReference type="PRINTS" id="PR02002">
    <property type="entry name" value="INSLNLIKEGF"/>
</dbReference>
<dbReference type="PRINTS" id="PR02006">
    <property type="entry name" value="INSLNLIKEGF2"/>
</dbReference>
<dbReference type="PRINTS" id="PR00276">
    <property type="entry name" value="INSULINFAMLY"/>
</dbReference>
<dbReference type="SMART" id="SM00078">
    <property type="entry name" value="IlGF"/>
    <property type="match status" value="1"/>
</dbReference>
<dbReference type="SUPFAM" id="SSF56994">
    <property type="entry name" value="Insulin-like"/>
    <property type="match status" value="1"/>
</dbReference>
<dbReference type="PROSITE" id="PS00262">
    <property type="entry name" value="INSULIN"/>
    <property type="match status" value="1"/>
</dbReference>